<gene>
    <name evidence="1" type="primary">ilvC</name>
</gene>
<dbReference type="EC" id="1.1.1.86" evidence="1"/>
<dbReference type="EMBL" id="AF130812">
    <property type="protein sequence ID" value="AAF13799.1"/>
    <property type="molecule type" value="Genomic_DNA"/>
</dbReference>
<dbReference type="SMR" id="Q9RQ55"/>
<dbReference type="STRING" id="118101.ATN01_02985"/>
<dbReference type="UniPathway" id="UPA00047">
    <property type="reaction ID" value="UER00056"/>
</dbReference>
<dbReference type="UniPathway" id="UPA00049">
    <property type="reaction ID" value="UER00060"/>
</dbReference>
<dbReference type="GO" id="GO:0005829">
    <property type="term" value="C:cytosol"/>
    <property type="evidence" value="ECO:0007669"/>
    <property type="project" value="TreeGrafter"/>
</dbReference>
<dbReference type="GO" id="GO:0004455">
    <property type="term" value="F:ketol-acid reductoisomerase activity"/>
    <property type="evidence" value="ECO:0007669"/>
    <property type="project" value="UniProtKB-UniRule"/>
</dbReference>
<dbReference type="GO" id="GO:0000287">
    <property type="term" value="F:magnesium ion binding"/>
    <property type="evidence" value="ECO:0007669"/>
    <property type="project" value="UniProtKB-UniRule"/>
</dbReference>
<dbReference type="GO" id="GO:0009097">
    <property type="term" value="P:isoleucine biosynthetic process"/>
    <property type="evidence" value="ECO:0007669"/>
    <property type="project" value="UniProtKB-UniRule"/>
</dbReference>
<dbReference type="GO" id="GO:0009099">
    <property type="term" value="P:L-valine biosynthetic process"/>
    <property type="evidence" value="ECO:0007669"/>
    <property type="project" value="UniProtKB-UniRule"/>
</dbReference>
<dbReference type="Gene3D" id="1.10.1040.10">
    <property type="entry name" value="N-(1-d-carboxylethyl)-l-norvaline Dehydrogenase, domain 2"/>
    <property type="match status" value="1"/>
</dbReference>
<dbReference type="Gene3D" id="3.40.50.720">
    <property type="entry name" value="NAD(P)-binding Rossmann-like Domain"/>
    <property type="match status" value="1"/>
</dbReference>
<dbReference type="HAMAP" id="MF_00435">
    <property type="entry name" value="IlvC"/>
    <property type="match status" value="1"/>
</dbReference>
<dbReference type="InterPro" id="IPR008927">
    <property type="entry name" value="6-PGluconate_DH-like_C_sf"/>
</dbReference>
<dbReference type="InterPro" id="IPR013328">
    <property type="entry name" value="6PGD_dom2"/>
</dbReference>
<dbReference type="InterPro" id="IPR013023">
    <property type="entry name" value="KARI"/>
</dbReference>
<dbReference type="InterPro" id="IPR000506">
    <property type="entry name" value="KARI_C"/>
</dbReference>
<dbReference type="InterPro" id="IPR013116">
    <property type="entry name" value="KARI_N"/>
</dbReference>
<dbReference type="InterPro" id="IPR036291">
    <property type="entry name" value="NAD(P)-bd_dom_sf"/>
</dbReference>
<dbReference type="NCBIfam" id="TIGR00465">
    <property type="entry name" value="ilvC"/>
    <property type="match status" value="1"/>
</dbReference>
<dbReference type="NCBIfam" id="NF003557">
    <property type="entry name" value="PRK05225.1"/>
    <property type="match status" value="1"/>
</dbReference>
<dbReference type="PANTHER" id="PTHR21371">
    <property type="entry name" value="KETOL-ACID REDUCTOISOMERASE, MITOCHONDRIAL"/>
    <property type="match status" value="1"/>
</dbReference>
<dbReference type="PANTHER" id="PTHR21371:SF1">
    <property type="entry name" value="KETOL-ACID REDUCTOISOMERASE, MITOCHONDRIAL"/>
    <property type="match status" value="1"/>
</dbReference>
<dbReference type="Pfam" id="PF01450">
    <property type="entry name" value="KARI_C"/>
    <property type="match status" value="2"/>
</dbReference>
<dbReference type="Pfam" id="PF07991">
    <property type="entry name" value="KARI_N"/>
    <property type="match status" value="1"/>
</dbReference>
<dbReference type="SUPFAM" id="SSF48179">
    <property type="entry name" value="6-phosphogluconate dehydrogenase C-terminal domain-like"/>
    <property type="match status" value="2"/>
</dbReference>
<dbReference type="SUPFAM" id="SSF51735">
    <property type="entry name" value="NAD(P)-binding Rossmann-fold domains"/>
    <property type="match status" value="1"/>
</dbReference>
<dbReference type="PROSITE" id="PS51851">
    <property type="entry name" value="KARI_C"/>
    <property type="match status" value="2"/>
</dbReference>
<dbReference type="PROSITE" id="PS51850">
    <property type="entry name" value="KARI_N"/>
    <property type="match status" value="1"/>
</dbReference>
<reference key="1">
    <citation type="journal article" date="1999" name="Mol. Biol. Evol.">
        <title>Sequence evolution in bacterial endosymbionts having extreme base compositions.</title>
        <authorList>
            <person name="Clark M.A."/>
            <person name="Moran N.A."/>
            <person name="Baumann P."/>
        </authorList>
    </citation>
    <scope>NUCLEOTIDE SEQUENCE [GENOMIC DNA]</scope>
</reference>
<name>ILVC_BUCDN</name>
<comment type="function">
    <text evidence="1">Involved in the biosynthesis of branched-chain amino acids (BCAA). Catalyzes an alkyl-migration followed by a ketol-acid reduction of (S)-2-acetolactate (S2AL) to yield (R)-2,3-dihydroxy-isovalerate. In the isomerase reaction, S2AL is rearranged via a Mg-dependent methyl migration to produce 3-hydroxy-3-methyl-2-ketobutyrate (HMKB). In the reductase reaction, this 2-ketoacid undergoes a metal-dependent reduction by NADPH to yield (R)-2,3-dihydroxy-isovalerate.</text>
</comment>
<comment type="catalytic activity">
    <reaction evidence="1">
        <text>(2R)-2,3-dihydroxy-3-methylbutanoate + NADP(+) = (2S)-2-acetolactate + NADPH + H(+)</text>
        <dbReference type="Rhea" id="RHEA:22068"/>
        <dbReference type="ChEBI" id="CHEBI:15378"/>
        <dbReference type="ChEBI" id="CHEBI:49072"/>
        <dbReference type="ChEBI" id="CHEBI:57783"/>
        <dbReference type="ChEBI" id="CHEBI:58349"/>
        <dbReference type="ChEBI" id="CHEBI:58476"/>
        <dbReference type="EC" id="1.1.1.86"/>
    </reaction>
</comment>
<comment type="catalytic activity">
    <reaction evidence="1">
        <text>(2R,3R)-2,3-dihydroxy-3-methylpentanoate + NADP(+) = (S)-2-ethyl-2-hydroxy-3-oxobutanoate + NADPH + H(+)</text>
        <dbReference type="Rhea" id="RHEA:13493"/>
        <dbReference type="ChEBI" id="CHEBI:15378"/>
        <dbReference type="ChEBI" id="CHEBI:49256"/>
        <dbReference type="ChEBI" id="CHEBI:49258"/>
        <dbReference type="ChEBI" id="CHEBI:57783"/>
        <dbReference type="ChEBI" id="CHEBI:58349"/>
        <dbReference type="EC" id="1.1.1.86"/>
    </reaction>
</comment>
<comment type="cofactor">
    <cofactor evidence="1">
        <name>Mg(2+)</name>
        <dbReference type="ChEBI" id="CHEBI:18420"/>
    </cofactor>
    <text evidence="1">Binds 2 magnesium ions per subunit.</text>
</comment>
<comment type="pathway">
    <text evidence="1">Amino-acid biosynthesis; L-isoleucine biosynthesis; L-isoleucine from 2-oxobutanoate: step 2/4.</text>
</comment>
<comment type="pathway">
    <text evidence="1">Amino-acid biosynthesis; L-valine biosynthesis; L-valine from pyruvate: step 2/4.</text>
</comment>
<comment type="similarity">
    <text evidence="1">Belongs to the ketol-acid reductoisomerase family.</text>
</comment>
<feature type="chain" id="PRO_0000151289" description="Ketol-acid reductoisomerase (NADP(+))">
    <location>
        <begin position="1"/>
        <end position="489"/>
    </location>
</feature>
<feature type="domain" description="KARI N-terminal Rossmann" evidence="2">
    <location>
        <begin position="16"/>
        <end position="207"/>
    </location>
</feature>
<feature type="domain" description="KARI C-terminal knotted 1" evidence="3">
    <location>
        <begin position="208"/>
        <end position="343"/>
    </location>
</feature>
<feature type="domain" description="KARI C-terminal knotted 2" evidence="3">
    <location>
        <begin position="344"/>
        <end position="483"/>
    </location>
</feature>
<feature type="active site" evidence="1">
    <location>
        <position position="131"/>
    </location>
</feature>
<feature type="binding site" evidence="1">
    <location>
        <begin position="44"/>
        <end position="47"/>
    </location>
    <ligand>
        <name>NADP(+)</name>
        <dbReference type="ChEBI" id="CHEBI:58349"/>
    </ligand>
</feature>
<feature type="binding site" evidence="1">
    <location>
        <position position="67"/>
    </location>
    <ligand>
        <name>NADP(+)</name>
        <dbReference type="ChEBI" id="CHEBI:58349"/>
    </ligand>
</feature>
<feature type="binding site" evidence="1">
    <location>
        <position position="77"/>
    </location>
    <ligand>
        <name>NADP(+)</name>
        <dbReference type="ChEBI" id="CHEBI:58349"/>
    </ligand>
</feature>
<feature type="binding site" evidence="1">
    <location>
        <begin position="107"/>
        <end position="109"/>
    </location>
    <ligand>
        <name>NADP(+)</name>
        <dbReference type="ChEBI" id="CHEBI:58349"/>
    </ligand>
</feature>
<feature type="binding site" evidence="1">
    <location>
        <position position="157"/>
    </location>
    <ligand>
        <name>NADP(+)</name>
        <dbReference type="ChEBI" id="CHEBI:58349"/>
    </ligand>
</feature>
<feature type="binding site" evidence="1">
    <location>
        <position position="216"/>
    </location>
    <ligand>
        <name>Mg(2+)</name>
        <dbReference type="ChEBI" id="CHEBI:18420"/>
        <label>1</label>
    </ligand>
</feature>
<feature type="binding site" evidence="1">
    <location>
        <position position="216"/>
    </location>
    <ligand>
        <name>Mg(2+)</name>
        <dbReference type="ChEBI" id="CHEBI:18420"/>
        <label>2</label>
    </ligand>
</feature>
<feature type="binding site" evidence="1">
    <location>
        <position position="220"/>
    </location>
    <ligand>
        <name>Mg(2+)</name>
        <dbReference type="ChEBI" id="CHEBI:18420"/>
        <label>1</label>
    </ligand>
</feature>
<feature type="binding site" evidence="1">
    <location>
        <position position="388"/>
    </location>
    <ligand>
        <name>Mg(2+)</name>
        <dbReference type="ChEBI" id="CHEBI:18420"/>
        <label>2</label>
    </ligand>
</feature>
<feature type="binding site" evidence="1">
    <location>
        <position position="392"/>
    </location>
    <ligand>
        <name>Mg(2+)</name>
        <dbReference type="ChEBI" id="CHEBI:18420"/>
        <label>2</label>
    </ligand>
</feature>
<feature type="binding site" evidence="1">
    <location>
        <position position="413"/>
    </location>
    <ligand>
        <name>substrate</name>
    </ligand>
</feature>
<proteinExistence type="inferred from homology"/>
<keyword id="KW-0028">Amino-acid biosynthesis</keyword>
<keyword id="KW-0100">Branched-chain amino acid biosynthesis</keyword>
<keyword id="KW-0460">Magnesium</keyword>
<keyword id="KW-0479">Metal-binding</keyword>
<keyword id="KW-0521">NADP</keyword>
<keyword id="KW-0560">Oxidoreductase</keyword>
<keyword id="KW-0677">Repeat</keyword>
<sequence>MNYFNTLNFRQKINQIKKCRFMEKKEFNKKNEILKNKKIVIVGCGSQGLNQGLNMRDSGLNISYALRKNSILKKNQSWINATKNNFLVGDYESLIPNADLVINLTPDKQHSNVVKELQKLMKKDACLGYSHGFNIVEKLRNIRKDITVIMVAPKCPGTEVREEYKRGFGVGTLIAVHNENDYSNMGLEVAKAWAFSTGGHRAGVLESSFVAEVKSDLMGEQTILCGMLQTASLVCYEKLITTQNHPGYAGKLIQFGWETITESLKHGGITLMMDRLSNSSKIRAFKLSQEIKEFSQNLFQKHMDDIISGDFSSKMIQDWKNKDQNLLNWRYKTKNTSFEQSPDYDKKILEQEYYDHGILMVAILKAGIELSFETMIQSGIMEESAYYESLHELPLIANTIARKKLYEMNMVISDTAEYGNYLFSESAYPILKEFVKNINNTDLGSALPRNSVNNIELYNVNTMIRNHPIEIIGRKLRSYMKNMKTIIVG</sequence>
<accession>Q9RQ55</accession>
<evidence type="ECO:0000255" key="1">
    <source>
        <dbReference type="HAMAP-Rule" id="MF_00435"/>
    </source>
</evidence>
<evidence type="ECO:0000255" key="2">
    <source>
        <dbReference type="PROSITE-ProRule" id="PRU01197"/>
    </source>
</evidence>
<evidence type="ECO:0000255" key="3">
    <source>
        <dbReference type="PROSITE-ProRule" id="PRU01198"/>
    </source>
</evidence>
<organism>
    <name type="scientific">Buchnera aphidicola subsp. Diuraphis noxia</name>
    <dbReference type="NCBI Taxonomy" id="118101"/>
    <lineage>
        <taxon>Bacteria</taxon>
        <taxon>Pseudomonadati</taxon>
        <taxon>Pseudomonadota</taxon>
        <taxon>Gammaproteobacteria</taxon>
        <taxon>Enterobacterales</taxon>
        <taxon>Erwiniaceae</taxon>
        <taxon>Buchnera</taxon>
    </lineage>
</organism>
<protein>
    <recommendedName>
        <fullName evidence="1">Ketol-acid reductoisomerase (NADP(+))</fullName>
        <shortName evidence="1">KARI</shortName>
        <ecNumber evidence="1">1.1.1.86</ecNumber>
    </recommendedName>
    <alternativeName>
        <fullName evidence="1">Acetohydroxy-acid isomeroreductase</fullName>
        <shortName evidence="1">AHIR</shortName>
    </alternativeName>
    <alternativeName>
        <fullName evidence="1">Alpha-keto-beta-hydroxylacyl reductoisomerase</fullName>
    </alternativeName>
    <alternativeName>
        <fullName evidence="1">Ketol-acid reductoisomerase type 2</fullName>
    </alternativeName>
    <alternativeName>
        <fullName evidence="1">Ketol-acid reductoisomerase type II</fullName>
    </alternativeName>
</protein>